<reference key="1">
    <citation type="journal article" date="1994" name="Nature">
        <title>2.2 Mb of contiguous nucleotide sequence from chromosome III of C. elegans.</title>
        <authorList>
            <person name="Wilson R."/>
            <person name="Ainscough R."/>
            <person name="Anderson K."/>
            <person name="Baynes C."/>
            <person name="Berks M."/>
            <person name="Bonfield J."/>
            <person name="Burton J."/>
            <person name="Connell M."/>
            <person name="Copsey T."/>
            <person name="Cooper J."/>
            <person name="Coulson A."/>
            <person name="Craxton M."/>
            <person name="Dear S."/>
            <person name="Du Z."/>
            <person name="Durbin R."/>
            <person name="Favello A."/>
            <person name="Fraser A."/>
            <person name="Fulton L."/>
            <person name="Gardner A."/>
            <person name="Green P."/>
            <person name="Hawkins T."/>
            <person name="Hillier L."/>
            <person name="Jier M."/>
            <person name="Johnston L."/>
            <person name="Jones M."/>
            <person name="Kershaw J."/>
            <person name="Kirsten J."/>
            <person name="Laisster N."/>
            <person name="Latreille P."/>
            <person name="Lightning J."/>
            <person name="Lloyd C."/>
            <person name="Mortimore B."/>
            <person name="O'Callaghan M."/>
            <person name="Parsons J."/>
            <person name="Percy C."/>
            <person name="Rifken L."/>
            <person name="Roopra A."/>
            <person name="Saunders D."/>
            <person name="Shownkeen R."/>
            <person name="Sims M."/>
            <person name="Smaldon N."/>
            <person name="Smith A."/>
            <person name="Smith M."/>
            <person name="Sonnhammer E."/>
            <person name="Staden R."/>
            <person name="Sulston J."/>
            <person name="Thierry-Mieg J."/>
            <person name="Thomas K."/>
            <person name="Vaudin M."/>
            <person name="Vaughan K."/>
            <person name="Waterston R."/>
            <person name="Watson A."/>
            <person name="Weinstock L."/>
            <person name="Wilkinson-Sproat J."/>
            <person name="Wohldman P."/>
        </authorList>
    </citation>
    <scope>NUCLEOTIDE SEQUENCE [LARGE SCALE GENOMIC DNA]</scope>
    <source>
        <strain>Bristol N2</strain>
    </source>
</reference>
<reference key="2">
    <citation type="journal article" date="1998" name="Science">
        <title>Genome sequence of the nematode C. elegans: a platform for investigating biology.</title>
        <authorList>
            <consortium name="The C. elegans sequencing consortium"/>
        </authorList>
    </citation>
    <scope>NUCLEOTIDE SEQUENCE [LARGE SCALE GENOMIC DNA]</scope>
    <source>
        <strain>Bristol N2</strain>
    </source>
</reference>
<protein>
    <recommendedName>
        <fullName evidence="6">Probable acyl-coenzyme A oxidase acox-1.5</fullName>
        <shortName evidence="6">AOX 1.5</shortName>
        <shortName evidence="7">Acyl-CoA oxidase 1.5</shortName>
        <ecNumber evidence="2">1.3.3.-</ecNumber>
    </recommendedName>
</protein>
<evidence type="ECO:0000250" key="1">
    <source>
        <dbReference type="UniProtKB" id="O62137"/>
    </source>
</evidence>
<evidence type="ECO:0000250" key="2">
    <source>
        <dbReference type="UniProtKB" id="O62140"/>
    </source>
</evidence>
<evidence type="ECO:0000250" key="3">
    <source>
        <dbReference type="UniProtKB" id="P07872"/>
    </source>
</evidence>
<evidence type="ECO:0000255" key="4"/>
<evidence type="ECO:0000255" key="5">
    <source>
        <dbReference type="PIRSR" id="PIRSR000168-2"/>
    </source>
</evidence>
<evidence type="ECO:0000305" key="6"/>
<evidence type="ECO:0000312" key="7">
    <source>
        <dbReference type="WormBase" id="C48B4.1"/>
    </source>
</evidence>
<dbReference type="EC" id="1.3.3.-" evidence="2"/>
<dbReference type="EMBL" id="Z29117">
    <property type="protein sequence ID" value="CAA82376.1"/>
    <property type="molecule type" value="Genomic_DNA"/>
</dbReference>
<dbReference type="PIR" id="S40722">
    <property type="entry name" value="S40722"/>
</dbReference>
<dbReference type="RefSeq" id="NP_499119.1">
    <property type="nucleotide sequence ID" value="NM_066718.5"/>
</dbReference>
<dbReference type="SMR" id="P34355"/>
<dbReference type="BioGRID" id="41548">
    <property type="interactions" value="2"/>
</dbReference>
<dbReference type="FunCoup" id="P34355">
    <property type="interactions" value="1479"/>
</dbReference>
<dbReference type="STRING" id="6239.C48B4.1.1"/>
<dbReference type="PaxDb" id="6239-C48B4.1"/>
<dbReference type="PeptideAtlas" id="P34355"/>
<dbReference type="EnsemblMetazoa" id="C48B4.1.1">
    <property type="protein sequence ID" value="C48B4.1.1"/>
    <property type="gene ID" value="WBGene00008167"/>
</dbReference>
<dbReference type="GeneID" id="176353"/>
<dbReference type="KEGG" id="cel:CELE_C48B4.1"/>
<dbReference type="UCSC" id="C48B4.1.1">
    <property type="organism name" value="c. elegans"/>
</dbReference>
<dbReference type="AGR" id="WB:WBGene00008167"/>
<dbReference type="CTD" id="176353"/>
<dbReference type="WormBase" id="C48B4.1">
    <property type="protein sequence ID" value="CE00491"/>
    <property type="gene ID" value="WBGene00008167"/>
    <property type="gene designation" value="acox-1.5"/>
</dbReference>
<dbReference type="eggNOG" id="KOG0136">
    <property type="taxonomic scope" value="Eukaryota"/>
</dbReference>
<dbReference type="HOGENOM" id="CLU_014629_3_1_1"/>
<dbReference type="InParanoid" id="P34355"/>
<dbReference type="OMA" id="ICTRFSA"/>
<dbReference type="OrthoDB" id="538336at2759"/>
<dbReference type="PhylomeDB" id="P34355"/>
<dbReference type="Reactome" id="R-CEL-193368">
    <property type="pathway name" value="Synthesis of bile acids and bile salts via 7alpha-hydroxycholesterol"/>
</dbReference>
<dbReference type="Reactome" id="R-CEL-389887">
    <property type="pathway name" value="Beta-oxidation of pristanoyl-CoA"/>
</dbReference>
<dbReference type="Reactome" id="R-CEL-9033241">
    <property type="pathway name" value="Peroxisomal protein import"/>
</dbReference>
<dbReference type="UniPathway" id="UPA00661"/>
<dbReference type="PRO" id="PR:P34355"/>
<dbReference type="Proteomes" id="UP000001940">
    <property type="component" value="Chromosome III"/>
</dbReference>
<dbReference type="Bgee" id="WBGene00008167">
    <property type="expression patterns" value="Expressed in larva and 4 other cell types or tissues"/>
</dbReference>
<dbReference type="GO" id="GO:0005777">
    <property type="term" value="C:peroxisome"/>
    <property type="evidence" value="ECO:0000318"/>
    <property type="project" value="GO_Central"/>
</dbReference>
<dbReference type="GO" id="GO:0003997">
    <property type="term" value="F:acyl-CoA oxidase activity"/>
    <property type="evidence" value="ECO:0000318"/>
    <property type="project" value="GO_Central"/>
</dbReference>
<dbReference type="GO" id="GO:0005524">
    <property type="term" value="F:ATP binding"/>
    <property type="evidence" value="ECO:0007669"/>
    <property type="project" value="UniProtKB-KW"/>
</dbReference>
<dbReference type="GO" id="GO:0071949">
    <property type="term" value="F:FAD binding"/>
    <property type="evidence" value="ECO:0007669"/>
    <property type="project" value="InterPro"/>
</dbReference>
<dbReference type="GO" id="GO:0005504">
    <property type="term" value="F:fatty acid binding"/>
    <property type="evidence" value="ECO:0000318"/>
    <property type="project" value="GO_Central"/>
</dbReference>
<dbReference type="GO" id="GO:0050660">
    <property type="term" value="F:flavin adenine dinucleotide binding"/>
    <property type="evidence" value="ECO:0000318"/>
    <property type="project" value="GO_Central"/>
</dbReference>
<dbReference type="GO" id="GO:1904070">
    <property type="term" value="P:ascaroside biosynthetic process"/>
    <property type="evidence" value="ECO:0000318"/>
    <property type="project" value="GO_Central"/>
</dbReference>
<dbReference type="GO" id="GO:0033540">
    <property type="term" value="P:fatty acid beta-oxidation using acyl-CoA oxidase"/>
    <property type="evidence" value="ECO:0000318"/>
    <property type="project" value="GO_Central"/>
</dbReference>
<dbReference type="GO" id="GO:0042811">
    <property type="term" value="P:pheromone biosynthetic process"/>
    <property type="evidence" value="ECO:0000315"/>
    <property type="project" value="CACAO"/>
</dbReference>
<dbReference type="CDD" id="cd01150">
    <property type="entry name" value="AXO"/>
    <property type="match status" value="1"/>
</dbReference>
<dbReference type="FunFam" id="1.10.540.10:FF:000006">
    <property type="entry name" value="Acyl-coenzyme A oxidase"/>
    <property type="match status" value="1"/>
</dbReference>
<dbReference type="FunFam" id="1.20.140.10:FF:000005">
    <property type="entry name" value="Acyl-coenzyme A oxidase"/>
    <property type="match status" value="1"/>
</dbReference>
<dbReference type="FunFam" id="1.20.140.10:FF:000013">
    <property type="entry name" value="Acyl-coenzyme A oxidase"/>
    <property type="match status" value="1"/>
</dbReference>
<dbReference type="FunFam" id="2.40.110.10:FF:000003">
    <property type="entry name" value="Acyl-coenzyme A oxidase"/>
    <property type="match status" value="1"/>
</dbReference>
<dbReference type="Gene3D" id="1.10.540.10">
    <property type="entry name" value="Acyl-CoA dehydrogenase/oxidase, N-terminal domain"/>
    <property type="match status" value="1"/>
</dbReference>
<dbReference type="Gene3D" id="2.40.110.10">
    <property type="entry name" value="Butyryl-CoA Dehydrogenase, subunit A, domain 2"/>
    <property type="match status" value="1"/>
</dbReference>
<dbReference type="Gene3D" id="1.20.140.10">
    <property type="entry name" value="Butyryl-CoA Dehydrogenase, subunit A, domain 3"/>
    <property type="match status" value="2"/>
</dbReference>
<dbReference type="InterPro" id="IPR034171">
    <property type="entry name" value="ACO"/>
</dbReference>
<dbReference type="InterPro" id="IPR055060">
    <property type="entry name" value="ACOX_C_alpha1"/>
</dbReference>
<dbReference type="InterPro" id="IPR029320">
    <property type="entry name" value="Acyl-CoA_ox_N"/>
</dbReference>
<dbReference type="InterPro" id="IPR046373">
    <property type="entry name" value="Acyl-CoA_Oxase/DH_mid-dom_sf"/>
</dbReference>
<dbReference type="InterPro" id="IPR012258">
    <property type="entry name" value="Acyl-CoA_oxidase"/>
</dbReference>
<dbReference type="InterPro" id="IPR002655">
    <property type="entry name" value="Acyl-CoA_oxidase_C"/>
</dbReference>
<dbReference type="InterPro" id="IPR036250">
    <property type="entry name" value="AcylCo_DH-like_C"/>
</dbReference>
<dbReference type="InterPro" id="IPR037069">
    <property type="entry name" value="AcylCoA_DH/ox_N_sf"/>
</dbReference>
<dbReference type="InterPro" id="IPR009100">
    <property type="entry name" value="AcylCoA_DH/oxidase_NM_dom_sf"/>
</dbReference>
<dbReference type="PANTHER" id="PTHR10909:SF304">
    <property type="entry name" value="ACYL-COENZYME A OXIDASE ACOX-1.5-RELATED"/>
    <property type="match status" value="1"/>
</dbReference>
<dbReference type="PANTHER" id="PTHR10909">
    <property type="entry name" value="ELECTRON TRANSPORT OXIDOREDUCTASE"/>
    <property type="match status" value="1"/>
</dbReference>
<dbReference type="Pfam" id="PF01756">
    <property type="entry name" value="ACOX"/>
    <property type="match status" value="1"/>
</dbReference>
<dbReference type="Pfam" id="PF22924">
    <property type="entry name" value="ACOX_C_alpha1"/>
    <property type="match status" value="1"/>
</dbReference>
<dbReference type="Pfam" id="PF14749">
    <property type="entry name" value="Acyl-CoA_ox_N"/>
    <property type="match status" value="1"/>
</dbReference>
<dbReference type="PIRSF" id="PIRSF000168">
    <property type="entry name" value="Acyl-CoA_oxidase"/>
    <property type="match status" value="1"/>
</dbReference>
<dbReference type="SUPFAM" id="SSF47203">
    <property type="entry name" value="Acyl-CoA dehydrogenase C-terminal domain-like"/>
    <property type="match status" value="2"/>
</dbReference>
<dbReference type="SUPFAM" id="SSF56645">
    <property type="entry name" value="Acyl-CoA dehydrogenase NM domain-like"/>
    <property type="match status" value="1"/>
</dbReference>
<feature type="chain" id="PRO_0000204688" description="Probable acyl-coenzyme A oxidase acox-1.5" evidence="6">
    <location>
        <begin position="1"/>
        <end position="659"/>
    </location>
</feature>
<feature type="short sequence motif" description="Microbody targeting signal" evidence="4">
    <location>
        <begin position="657"/>
        <end position="659"/>
    </location>
</feature>
<feature type="active site" description="Proton acceptor" evidence="3">
    <location>
        <position position="433"/>
    </location>
</feature>
<feature type="binding site" description="in other chain" evidence="1">
    <location>
        <begin position="148"/>
        <end position="151"/>
    </location>
    <ligand>
        <name>FAD</name>
        <dbReference type="ChEBI" id="CHEBI:57692"/>
        <note>ligand shared between dimeric partners</note>
    </ligand>
</feature>
<feature type="binding site" description="in other chain" evidence="1">
    <location>
        <begin position="156"/>
        <end position="157"/>
    </location>
    <ligand>
        <name>FAD</name>
        <dbReference type="ChEBI" id="CHEBI:57692"/>
        <note>ligand shared between dimeric partners</note>
    </ligand>
</feature>
<feature type="binding site" description="in other chain" evidence="1 5">
    <location>
        <position position="190"/>
    </location>
    <ligand>
        <name>FAD</name>
        <dbReference type="ChEBI" id="CHEBI:57692"/>
        <note>ligand shared between dimeric partners</note>
    </ligand>
</feature>
<feature type="binding site" evidence="1">
    <location>
        <begin position="284"/>
        <end position="287"/>
    </location>
    <ligand>
        <name>substrate</name>
    </ligand>
</feature>
<feature type="binding site" evidence="1">
    <location>
        <position position="294"/>
    </location>
    <ligand>
        <name>substrate</name>
    </ligand>
</feature>
<feature type="binding site" evidence="1">
    <location>
        <position position="319"/>
    </location>
    <ligand>
        <name>FAD</name>
        <dbReference type="ChEBI" id="CHEBI:57692"/>
        <note>ligand shared between dimeric partners</note>
    </ligand>
</feature>
<feature type="binding site" evidence="1">
    <location>
        <begin position="339"/>
        <end position="342"/>
    </location>
    <ligand>
        <name>FAD</name>
        <dbReference type="ChEBI" id="CHEBI:57692"/>
        <note>ligand shared between dimeric partners</note>
    </ligand>
</feature>
<feature type="binding site" description="in other chain" evidence="2">
    <location>
        <position position="395"/>
    </location>
    <ligand>
        <name>ATP</name>
        <dbReference type="ChEBI" id="CHEBI:30616"/>
        <note>ligand shared between dimeric partners</note>
    </ligand>
</feature>
<feature type="binding site" evidence="1">
    <location>
        <position position="403"/>
    </location>
    <ligand>
        <name>ATP</name>
        <dbReference type="ChEBI" id="CHEBI:30616"/>
        <note>ligand shared between dimeric partners</note>
    </ligand>
</feature>
<feature type="binding site" evidence="1">
    <location>
        <position position="410"/>
    </location>
    <ligand>
        <name>FAD</name>
        <dbReference type="ChEBI" id="CHEBI:57692"/>
        <note>ligand shared between dimeric partners</note>
    </ligand>
</feature>
<feature type="binding site" evidence="1">
    <location>
        <begin position="432"/>
        <end position="433"/>
    </location>
    <ligand>
        <name>substrate</name>
    </ligand>
</feature>
<feature type="binding site" description="in other chain" evidence="1">
    <location>
        <position position="435"/>
    </location>
    <ligand>
        <name>FAD</name>
        <dbReference type="ChEBI" id="CHEBI:57692"/>
        <note>ligand shared between dimeric partners</note>
    </ligand>
</feature>
<feature type="binding site" description="in other chain" evidence="1">
    <location>
        <begin position="524"/>
        <end position="527"/>
    </location>
    <ligand>
        <name>ATP</name>
        <dbReference type="ChEBI" id="CHEBI:30616"/>
        <note>ligand shared between dimeric partners</note>
    </ligand>
</feature>
<sequence>MPLNKLIQDGDNQDLTDERFKATFDTDALAAVFHGGEDALKRIRELRDEVTKRWHLFDALPGAHRTRAERMEDVSRKLKNLMESVGEFADFTNNLDMLVIIRDVMGIEGFPLALHNLMFVPTIQNQADDEQTEWWLMDALQGKIIGTYAQTELGHGTNLGAIETTATYDKLTEEFIIHTPTTTATKWWPGGLGTSCTHVVLVANLIIDTKNYGLHPFFVPIRDRNSYSVMSGVRVGDIGTKMGVNCVDNGFLAFDNYRIPRRNMLMKHSKVSKEGLYTAPSHPKVGYTTMLYMRSEMIYHQAYYLAMAMAISIRYSAVRRQGEIKPGTQEVQILDYQTQQYRIFPGLARCFAFNTAAATVRQMTENCIKQLSHGNSDVLADLHALSCGLKAVVTHQASQSIDQARQACGGHGYSDASYLPTLYTCSVGACTYEGENMVMLLQLSKYLMKAAAKAEKGEEMAPLVAYLVKPDITETNDKFAKMLSHFEHIARHRVMHAYRQMIEEEKQGIERDYAFANHSVDWTKAARAHTKLFIARGFVKSVQEVSDEAVHDVLTTLAELYLSYELIEMSADLTANGYLSESDVQQIRHQIYDSMRKTRRNAVSIVDSFDICDRELRSVLGRRDGHVYENLYKWAQMSPLNERNLPHVEKYLKPMTSKL</sequence>
<keyword id="KW-0067">ATP-binding</keyword>
<keyword id="KW-0274">FAD</keyword>
<keyword id="KW-0276">Fatty acid metabolism</keyword>
<keyword id="KW-0285">Flavoprotein</keyword>
<keyword id="KW-0443">Lipid metabolism</keyword>
<keyword id="KW-0547">Nucleotide-binding</keyword>
<keyword id="KW-0560">Oxidoreductase</keyword>
<keyword id="KW-0576">Peroxisome</keyword>
<keyword id="KW-1185">Reference proteome</keyword>
<name>ACX15_CAEEL</name>
<comment type="function">
    <text evidence="2">Involved in the first step of peroxisomal beta-oxidation by catalyzing the desaturation of fatty acid-derived side chains.</text>
</comment>
<comment type="cofactor">
    <cofactor evidence="2">
        <name>FAD</name>
        <dbReference type="ChEBI" id="CHEBI:57692"/>
    </cofactor>
</comment>
<comment type="activity regulation">
    <text evidence="2">Activated by ATP (By similarity). ATP binding leads to a conformational change that promotes FAD cofactor binding and enzyme activity (By similarity). ATP binding likely occurs during acox-1.5 folding and/or dimer formation (By similarity).</text>
</comment>
<comment type="pathway">
    <text evidence="2">Lipid metabolism; peroxisomal fatty acid beta-oxidation.</text>
</comment>
<comment type="subunit">
    <text evidence="2">Homodimer.</text>
</comment>
<comment type="subcellular location">
    <subcellularLocation>
        <location evidence="2">Peroxisome</location>
    </subcellularLocation>
</comment>
<comment type="similarity">
    <text evidence="6">Belongs to the acyl-CoA oxidase family.</text>
</comment>
<proteinExistence type="inferred from homology"/>
<organism>
    <name type="scientific">Caenorhabditis elegans</name>
    <dbReference type="NCBI Taxonomy" id="6239"/>
    <lineage>
        <taxon>Eukaryota</taxon>
        <taxon>Metazoa</taxon>
        <taxon>Ecdysozoa</taxon>
        <taxon>Nematoda</taxon>
        <taxon>Chromadorea</taxon>
        <taxon>Rhabditida</taxon>
        <taxon>Rhabditina</taxon>
        <taxon>Rhabditomorpha</taxon>
        <taxon>Rhabditoidea</taxon>
        <taxon>Rhabditidae</taxon>
        <taxon>Peloderinae</taxon>
        <taxon>Caenorhabditis</taxon>
    </lineage>
</organism>
<accession>P34355</accession>
<gene>
    <name evidence="7" type="primary">acox-1.5</name>
    <name evidence="7" type="synonym">acox-5</name>
    <name evidence="7" type="ORF">C48B4.1</name>
</gene>